<sequence length="977" mass="112101">MAQFYYKRNVNAPYRDRIPLRIVRAESELSPSEKAYLNAVEKGDYASVKKSLEEAEIYFKININCIDPLGRTALLIAIENENLELIELLLSFNVYVGDALLHAIRKEVVGAVELLLNHKKPSGEKQVPPILLDKQFSEFTPDITPIILAAHTNNYEIIKLLVQKGVSVPRPHEVRCNCVECVSSSDVDSLRHSRSRLNIYKALASPSLIALSSEDPFLTAFQLSWELQELSKVENEFKSEYEELSRQCKQFAKDLLDQTRSSRELEIILNYRDDNSLIEEQSGNDLARLKLAIKYRQKEFVAQPNCQQLLASRWYDEFPGWRRRHWAVKMVTCFIIGLLFPVFSVCYLIAPKSPLGLFIRKPFIKFICHTASYLTFLFLLLLASQHIDRSDLNRQGPPPTIVEWMILPWVLGFIWGEIKQMWDGGLQDYIHDWWNLMDFVMNSLYLATISLKIVAFVKYSALNPRESWDMWHPTLVAEALFAIANIFSSLRLISLFTANSHLGPLQISLGRMLLDILKFLFIYCLVLLAFANGLNQLYFYYEETKGLTCKGIRCEKQNNAFSTLFETLQSLFWSIFGLINLYVTNVKAQHEFTEFVGATMFGTYNVISLVVLLNMLIAMMNNSYQLIADHADIEWKFARTKLWMSYFEEGGTLPTPFNVIPSPKSLWYLIKWIWTHLCKKKMRRKPESFGTIGRRAADNLRRHHQYQEVMRNLVKRYVAAMIRDAKTEEGLTEENFKELKQDISSFRFEVLGLLRGSKLSTIQSANASKESSNSADSDEKSDSEGNSKDKKKNFSLFDLTTLIHPRSAAIASERHNISNGSALVVQEPPREKQRKVNFVTDIKNFGLFHRRSKQNAAEQNANQIFSVSEEVARQQAAGPLERNIQLESRGLASRGDLSIPGLSEQCVLVDHRERNTDTLGLQVGKRVCPFKSEKVVVEDTVPIIPKEKHAKEEDSSIDYDLNLPDTVTHEDYVTTRL</sequence>
<comment type="function">
    <text evidence="1 4 6 10 15 17">Forms a receptor-activated non-selective calcium permeant cation channel (PubMed:11042129, PubMed:11713258, PubMed:16144838, PubMed:39478185). Acts as a cell-cell contact-dependent endothelial calcium entry channel (PubMed:19996314). Forms a homomeric ion channel or a heteromeric ion channel with TRPC1; the heteromeric ion channel has reduced calcium permeability compared to the homomeric channel (PubMed:39478185). Also permeable to monovalent ions including sodium, lithium and cesium ions (PubMed:39478185).</text>
</comment>
<comment type="function">
    <molecule>Isoform Beta</molecule>
    <text evidence="6">Forms a receptor-activated non-selective calcium permeant cation channel.</text>
</comment>
<comment type="catalytic activity">
    <reaction evidence="4 6 10 15">
        <text>Ca(2+)(in) = Ca(2+)(out)</text>
        <dbReference type="Rhea" id="RHEA:29671"/>
        <dbReference type="ChEBI" id="CHEBI:29108"/>
    </reaction>
</comment>
<comment type="catalytic activity">
    <molecule>Isoform Beta</molecule>
    <reaction evidence="17">
        <text>Na(+)(in) = Na(+)(out)</text>
        <dbReference type="Rhea" id="RHEA:34963"/>
        <dbReference type="ChEBI" id="CHEBI:29101"/>
    </reaction>
</comment>
<comment type="catalytic activity">
    <molecule>Isoform Beta</molecule>
    <reaction evidence="17">
        <text>Li(+)(in) = Li(+)(out)</text>
        <dbReference type="Rhea" id="RHEA:78551"/>
        <dbReference type="ChEBI" id="CHEBI:49713"/>
    </reaction>
</comment>
<comment type="catalytic activity">
    <molecule>Isoform Beta</molecule>
    <reaction evidence="17">
        <text>Cs(+)(in) = Cs(+)(out)</text>
        <dbReference type="Rhea" id="RHEA:78555"/>
        <dbReference type="ChEBI" id="CHEBI:49547"/>
    </reaction>
</comment>
<comment type="catalytic activity">
    <molecule>Isoform Beta</molecule>
    <reaction evidence="6 17">
        <text>Ca(2+)(in) = Ca(2+)(out)</text>
        <dbReference type="Rhea" id="RHEA:29671"/>
        <dbReference type="ChEBI" id="CHEBI:29108"/>
    </reaction>
</comment>
<comment type="activity regulation">
    <text evidence="1 4 6 10 15 17">May be operated by a phosphatidylinositol second messenger system activated by receptor tyrosine kinases or G-protein coupled receptors (PubMed:11042129, PubMed:11713258, PubMed:16144838, PubMed:19996314). May be activated by intracellular calcium store depletion (By similarity). Inhibited by xanthine-based inhibitor Pico145 (PubMed:39478185).</text>
</comment>
<comment type="subunit">
    <text evidence="1 5 7 8 9 11 13 14 15 16 17">Homotetramer (PubMed:12032305, PubMed:39478185). Heterotetramer with TRPC1 and/or TRPC5 (PubMed:12032305, PubMed:39478185). Forms a heteromeric ion channel with TRPC1, with a 1:3 TRPC1:TRPC4 stoichiometry (PubMed:39478185). Interacts with TRPC4AP (By similarity). Isoform alpha but not isoform beta interacts with ITPR1, ITPR2 and ITPR3 (PubMed:11163362). Interacts with (via PDZ-binding domain) with NHERF1 (PubMed:12154080). Interacts with MX1 and RNF24 (PubMed:15757897, PubMed:17850865). Interacts (via CIRB domain) with SESTD1 (via spectrin 1 repeat) (PubMed:20164195). Interacts with CDH5 and CTNNB1 (PubMed:19996314). Interacts with SPTAN1 (via C-terminal spectrin repeats) and SPTBN5 (via C-terminus) (PubMed:18048348). Interacts (via protein 4.1-binding domain) with EPB41L2 (PubMed:16254212). Interacts with PLSCR1 (By similarity).</text>
</comment>
<comment type="interaction">
    <interactant intactId="EBI-929504">
        <id>Q9UBN4</id>
    </interactant>
    <interactant intactId="EBI-929476">
        <id>P20591</id>
        <label>MX1</label>
    </interactant>
    <organismsDiffer>false</organismsDiffer>
    <experiments>2</experiments>
</comment>
<comment type="subcellular location">
    <subcellularLocation>
        <location evidence="4 6 8 10 11">Cell membrane</location>
        <topology evidence="17">Multi-pass membrane protein</topology>
    </subcellularLocation>
    <text evidence="10">Enhanced insertion into the cell membrane after activation of the EGF receptor.</text>
</comment>
<comment type="subcellular location">
    <molecule>Isoform Beta</molecule>
    <subcellularLocation>
        <location evidence="6">Cell membrane</location>
        <topology evidence="17">Multi-pass membrane protein</topology>
    </subcellularLocation>
</comment>
<comment type="alternative products">
    <event type="alternative splicing"/>
    <isoform>
        <id>Q9UBN4-1</id>
        <name>Alpha</name>
        <sequence type="displayed"/>
    </isoform>
    <isoform>
        <id>Q9UBN4-2</id>
        <name>Beta</name>
        <sequence type="described" ref="VSP_006569"/>
    </isoform>
    <isoform>
        <id>Q9UBN4-3</id>
        <name>Delta</name>
        <sequence type="described" ref="VSP_006568"/>
    </isoform>
    <isoform>
        <id>Q9UBN4-4</id>
        <name>Gamma</name>
        <sequence type="described" ref="VSP_006567 VSP_006569"/>
    </isoform>
    <isoform>
        <id>Q9UBN4-5</id>
        <name>Epsilon</name>
        <sequence type="described" ref="VSP_041262"/>
    </isoform>
    <isoform>
        <id>Q9UBN4-6</id>
        <name>Zeta</name>
        <sequence type="described" ref="VSP_041439"/>
    </isoform>
    <isoform>
        <id>Q9UBN4-7</id>
        <name>Eta</name>
        <sequence type="described" ref="VSP_047747 VSP_047748"/>
    </isoform>
</comment>
<comment type="tissue specificity">
    <text evidence="15">Strongly expressed in placenta. Expressed at lower levels in heart, pancreas, kidney and brain. Expressed in endothelial cells. Isoform alpha was found to be the predominant isoform. Isoform beta was not found in pancreas and brain.</text>
</comment>
<comment type="domain">
    <text>The protein 4.1-binding domain (654-685) is required for binding to EPB41L2 and channel activation.</text>
</comment>
<comment type="domain">
    <text>The calmodulin- and inositol 1,4,5-trisphosphate receptor-binding (CIRB) domain (695-724) is sufficient for the interaction with SESTD1.</text>
</comment>
<comment type="domain">
    <text>The spectrin-binding domain (730-758) is required for binding to SPTAN1 and SPTBN5.</text>
</comment>
<comment type="PTM">
    <text evidence="10">Phosphorylation modulates TRPC channel function by regulating the level of TRPC4 at the cell surface and by increasing the association with NHERF1.</text>
</comment>
<comment type="miscellaneous">
    <text>The interaction with spectrin is important in controlling the translocation of TRPC4 channels to the plasma membrane following EGF stimulation.</text>
</comment>
<comment type="miscellaneous">
    <text>The cell membrane presentation, the calcium entry function and the interaction with junctional proteins (CTNNB1 and CDH5) are controlled by endothelial cell-cell contacts.</text>
</comment>
<comment type="similarity">
    <text evidence="20">Belongs to the transient receptor (TC 1.A.4) family. STrpC subfamily. TRPC4 sub-subfamily.</text>
</comment>
<name>TRPC4_HUMAN</name>
<protein>
    <recommendedName>
        <fullName>Short transient receptor potential channel 4</fullName>
        <shortName>TrpC4</shortName>
    </recommendedName>
    <alternativeName>
        <fullName>Trp-related protein 4</fullName>
        <shortName>hTrp-4</shortName>
        <shortName>hTrp4</shortName>
    </alternativeName>
</protein>
<evidence type="ECO:0000250" key="1">
    <source>
        <dbReference type="UniProtKB" id="Q9QUQ5"/>
    </source>
</evidence>
<evidence type="ECO:0000255" key="2"/>
<evidence type="ECO:0000256" key="3">
    <source>
        <dbReference type="SAM" id="MobiDB-lite"/>
    </source>
</evidence>
<evidence type="ECO:0000269" key="4">
    <source>
    </source>
</evidence>
<evidence type="ECO:0000269" key="5">
    <source>
    </source>
</evidence>
<evidence type="ECO:0000269" key="6">
    <source>
    </source>
</evidence>
<evidence type="ECO:0000269" key="7">
    <source>
    </source>
</evidence>
<evidence type="ECO:0000269" key="8">
    <source>
    </source>
</evidence>
<evidence type="ECO:0000269" key="9">
    <source>
    </source>
</evidence>
<evidence type="ECO:0000269" key="10">
    <source>
    </source>
</evidence>
<evidence type="ECO:0000269" key="11">
    <source>
    </source>
</evidence>
<evidence type="ECO:0000269" key="12">
    <source>
    </source>
</evidence>
<evidence type="ECO:0000269" key="13">
    <source>
    </source>
</evidence>
<evidence type="ECO:0000269" key="14">
    <source>
    </source>
</evidence>
<evidence type="ECO:0000269" key="15">
    <source>
    </source>
</evidence>
<evidence type="ECO:0000269" key="16">
    <source>
    </source>
</evidence>
<evidence type="ECO:0000269" key="17">
    <source>
    </source>
</evidence>
<evidence type="ECO:0000303" key="18">
    <source>
    </source>
</evidence>
<evidence type="ECO:0000303" key="19">
    <source>
    </source>
</evidence>
<evidence type="ECO:0000305" key="20"/>
<evidence type="ECO:0007744" key="21">
    <source>
        <dbReference type="PDB" id="8WPL"/>
    </source>
</evidence>
<evidence type="ECO:0007744" key="22">
    <source>
        <dbReference type="PDB" id="8WPM"/>
    </source>
</evidence>
<evidence type="ECO:0007744" key="23">
    <source>
        <dbReference type="PDB" id="8WPN"/>
    </source>
</evidence>
<evidence type="ECO:0007829" key="24">
    <source>
        <dbReference type="PDB" id="8WPL"/>
    </source>
</evidence>
<evidence type="ECO:0007829" key="25">
    <source>
        <dbReference type="PDB" id="8WPM"/>
    </source>
</evidence>
<evidence type="ECO:0007829" key="26">
    <source>
        <dbReference type="PDB" id="8WPN"/>
    </source>
</evidence>
<gene>
    <name type="primary">TRPC4</name>
</gene>
<dbReference type="EMBL" id="AF063822">
    <property type="protein sequence ID" value="AAF22927.1"/>
    <property type="molecule type" value="mRNA"/>
</dbReference>
<dbReference type="EMBL" id="AF063823">
    <property type="protein sequence ID" value="AAF22928.1"/>
    <property type="molecule type" value="mRNA"/>
</dbReference>
<dbReference type="EMBL" id="AF063824">
    <property type="protein sequence ID" value="AAF22929.1"/>
    <property type="molecule type" value="mRNA"/>
</dbReference>
<dbReference type="EMBL" id="AF063825">
    <property type="protein sequence ID" value="AAF22930.1"/>
    <property type="molecule type" value="mRNA"/>
</dbReference>
<dbReference type="EMBL" id="AF175406">
    <property type="protein sequence ID" value="AAD51736.1"/>
    <property type="molecule type" value="mRNA"/>
</dbReference>
<dbReference type="EMBL" id="AF421358">
    <property type="protein sequence ID" value="AAL24549.1"/>
    <property type="molecule type" value="mRNA"/>
</dbReference>
<dbReference type="EMBL" id="AF421359">
    <property type="protein sequence ID" value="AAL24550.1"/>
    <property type="molecule type" value="mRNA"/>
</dbReference>
<dbReference type="EMBL" id="AF421360">
    <property type="protein sequence ID" value="AAL24551.1"/>
    <property type="molecule type" value="mRNA"/>
</dbReference>
<dbReference type="EMBL" id="AF421361">
    <property type="protein sequence ID" value="AAL24552.1"/>
    <property type="molecule type" value="mRNA"/>
</dbReference>
<dbReference type="EMBL" id="AF421362">
    <property type="protein sequence ID" value="AAL24553.1"/>
    <property type="molecule type" value="mRNA"/>
</dbReference>
<dbReference type="EMBL" id="AL138679">
    <property type="status" value="NOT_ANNOTATED_CDS"/>
    <property type="molecule type" value="Genomic_DNA"/>
</dbReference>
<dbReference type="EMBL" id="AL354802">
    <property type="status" value="NOT_ANNOTATED_CDS"/>
    <property type="molecule type" value="Genomic_DNA"/>
</dbReference>
<dbReference type="EMBL" id="CH471075">
    <property type="protein sequence ID" value="EAX08595.1"/>
    <property type="molecule type" value="Genomic_DNA"/>
</dbReference>
<dbReference type="EMBL" id="CH471075">
    <property type="protein sequence ID" value="EAX08596.1"/>
    <property type="molecule type" value="Genomic_DNA"/>
</dbReference>
<dbReference type="EMBL" id="CH471075">
    <property type="protein sequence ID" value="EAX08597.1"/>
    <property type="molecule type" value="Genomic_DNA"/>
</dbReference>
<dbReference type="EMBL" id="CH471075">
    <property type="protein sequence ID" value="EAX08598.1"/>
    <property type="molecule type" value="Genomic_DNA"/>
</dbReference>
<dbReference type="EMBL" id="CH471075">
    <property type="protein sequence ID" value="EAX08600.1"/>
    <property type="molecule type" value="Genomic_DNA"/>
</dbReference>
<dbReference type="EMBL" id="CH471075">
    <property type="protein sequence ID" value="EAX08601.1"/>
    <property type="molecule type" value="Genomic_DNA"/>
</dbReference>
<dbReference type="EMBL" id="BC104725">
    <property type="protein sequence ID" value="AAI04726.1"/>
    <property type="molecule type" value="mRNA"/>
</dbReference>
<dbReference type="EMBL" id="U40983">
    <property type="protein sequence ID" value="AAC50630.1"/>
    <property type="molecule type" value="mRNA"/>
</dbReference>
<dbReference type="CCDS" id="CCDS45035.1">
    <molecule id="Q9UBN4-6"/>
</dbReference>
<dbReference type="CCDS" id="CCDS45036.1">
    <molecule id="Q9UBN4-4"/>
</dbReference>
<dbReference type="CCDS" id="CCDS45037.1">
    <molecule id="Q9UBN4-5"/>
</dbReference>
<dbReference type="CCDS" id="CCDS45038.1">
    <molecule id="Q9UBN4-2"/>
</dbReference>
<dbReference type="CCDS" id="CCDS45039.1">
    <molecule id="Q9UBN4-3"/>
</dbReference>
<dbReference type="CCDS" id="CCDS9365.1">
    <molecule id="Q9UBN4-1"/>
</dbReference>
<dbReference type="RefSeq" id="NP_001129427.1">
    <molecule id="Q9UBN4-2"/>
    <property type="nucleotide sequence ID" value="NM_001135955.3"/>
</dbReference>
<dbReference type="RefSeq" id="NP_001129428.1">
    <molecule id="Q9UBN4-4"/>
    <property type="nucleotide sequence ID" value="NM_001135956.3"/>
</dbReference>
<dbReference type="RefSeq" id="NP_001129429.1">
    <molecule id="Q9UBN4-3"/>
    <property type="nucleotide sequence ID" value="NM_001135957.3"/>
</dbReference>
<dbReference type="RefSeq" id="NP_001129430.1">
    <molecule id="Q9UBN4-6"/>
    <property type="nucleotide sequence ID" value="NM_001135958.3"/>
</dbReference>
<dbReference type="RefSeq" id="NP_003297.1">
    <molecule id="Q9UBN4-5"/>
    <property type="nucleotide sequence ID" value="NM_003306.3"/>
</dbReference>
<dbReference type="RefSeq" id="NP_057263.1">
    <molecule id="Q9UBN4-1"/>
    <property type="nucleotide sequence ID" value="NM_016179.4"/>
</dbReference>
<dbReference type="PDB" id="8WPL">
    <property type="method" value="EM"/>
    <property type="resolution" value="3.04 A"/>
    <property type="chains" value="B/C/D=1-977"/>
</dbReference>
<dbReference type="PDB" id="8WPM">
    <property type="method" value="EM"/>
    <property type="resolution" value="3.43 A"/>
    <property type="chains" value="B/C/D=1-977"/>
</dbReference>
<dbReference type="PDB" id="8WPN">
    <property type="method" value="EM"/>
    <property type="resolution" value="2.82 A"/>
    <property type="chains" value="A/B/C/D=1-977"/>
</dbReference>
<dbReference type="PDBsum" id="8WPL"/>
<dbReference type="PDBsum" id="8WPM"/>
<dbReference type="PDBsum" id="8WPN"/>
<dbReference type="EMDB" id="EMD-37718"/>
<dbReference type="EMDB" id="EMD-37719"/>
<dbReference type="EMDB" id="EMD-37720"/>
<dbReference type="SMR" id="Q9UBN4"/>
<dbReference type="BioGRID" id="113074">
    <property type="interactions" value="19"/>
</dbReference>
<dbReference type="ComplexPortal" id="CPX-25762">
    <property type="entry name" value="Short transient receptor potential channel complex,TRPC1-TRPC4 variant"/>
</dbReference>
<dbReference type="ComplexPortal" id="CPX-25775">
    <property type="entry name" value="Short transient receptor potential channel complex,TRPC1-TRPC4-TRPC5 variant"/>
</dbReference>
<dbReference type="ComplexPortal" id="CPX-25778">
    <property type="entry name" value="Short transient receptor potential channel complex, TRPC4 variant"/>
</dbReference>
<dbReference type="CORUM" id="Q9UBN4"/>
<dbReference type="FunCoup" id="Q9UBN4">
    <property type="interactions" value="43"/>
</dbReference>
<dbReference type="IntAct" id="Q9UBN4">
    <property type="interactions" value="4"/>
</dbReference>
<dbReference type="MINT" id="Q9UBN4"/>
<dbReference type="STRING" id="9606.ENSP00000486109"/>
<dbReference type="BindingDB" id="Q9UBN4"/>
<dbReference type="ChEMBL" id="CHEMBL4295971"/>
<dbReference type="DrugCentral" id="Q9UBN4"/>
<dbReference type="GuidetoPHARMACOLOGY" id="489"/>
<dbReference type="TCDB" id="1.A.4.1.12">
    <property type="family name" value="the transient receptor potential ca2+/cation channel (trp-cc) family"/>
</dbReference>
<dbReference type="GlyCosmos" id="Q9UBN4">
    <property type="glycosylation" value="1 site, 1 glycan"/>
</dbReference>
<dbReference type="GlyGen" id="Q9UBN4">
    <property type="glycosylation" value="2 sites, 1 O-linked glycan (1 site)"/>
</dbReference>
<dbReference type="iPTMnet" id="Q9UBN4"/>
<dbReference type="PhosphoSitePlus" id="Q9UBN4"/>
<dbReference type="BioMuta" id="TRPC4"/>
<dbReference type="DMDM" id="13633994"/>
<dbReference type="jPOST" id="Q9UBN4"/>
<dbReference type="MassIVE" id="Q9UBN4"/>
<dbReference type="PaxDb" id="9606-ENSP00000369027"/>
<dbReference type="PeptideAtlas" id="Q9UBN4"/>
<dbReference type="ProteomicsDB" id="77587"/>
<dbReference type="ProteomicsDB" id="84012">
    <molecule id="Q9UBN4-1"/>
</dbReference>
<dbReference type="ProteomicsDB" id="84013">
    <molecule id="Q9UBN4-2"/>
</dbReference>
<dbReference type="ProteomicsDB" id="84014">
    <molecule id="Q9UBN4-3"/>
</dbReference>
<dbReference type="ProteomicsDB" id="84015">
    <molecule id="Q9UBN4-4"/>
</dbReference>
<dbReference type="ProteomicsDB" id="84016">
    <molecule id="Q9UBN4-5"/>
</dbReference>
<dbReference type="ProteomicsDB" id="84017">
    <molecule id="Q9UBN4-6"/>
</dbReference>
<dbReference type="Antibodypedia" id="8254">
    <property type="antibodies" value="307 antibodies from 33 providers"/>
</dbReference>
<dbReference type="DNASU" id="7223"/>
<dbReference type="Ensembl" id="ENST00000338947.9">
    <molecule id="Q9UBN4-6"/>
    <property type="protein sequence ID" value="ENSP00000342580.5"/>
    <property type="gene ID" value="ENSG00000133107.15"/>
</dbReference>
<dbReference type="Ensembl" id="ENST00000355779.6">
    <molecule id="Q9UBN4-3"/>
    <property type="protein sequence ID" value="ENSP00000348025.2"/>
    <property type="gene ID" value="ENSG00000133107.15"/>
</dbReference>
<dbReference type="Ensembl" id="ENST00000358477.6">
    <molecule id="Q9UBN4-2"/>
    <property type="protein sequence ID" value="ENSP00000351264.2"/>
    <property type="gene ID" value="ENSG00000133107.15"/>
</dbReference>
<dbReference type="Ensembl" id="ENST00000379673.2">
    <molecule id="Q9UBN4-4"/>
    <property type="protein sequence ID" value="ENSP00000368995.2"/>
    <property type="gene ID" value="ENSG00000133107.15"/>
</dbReference>
<dbReference type="Ensembl" id="ENST00000379679.5">
    <molecule id="Q9UBN4-6"/>
    <property type="protein sequence ID" value="ENSP00000369001.1"/>
    <property type="gene ID" value="ENSG00000133107.15"/>
</dbReference>
<dbReference type="Ensembl" id="ENST00000379705.8">
    <molecule id="Q9UBN4-1"/>
    <property type="protein sequence ID" value="ENSP00000369027.4"/>
    <property type="gene ID" value="ENSG00000133107.15"/>
</dbReference>
<dbReference type="Ensembl" id="ENST00000488717.5">
    <molecule id="Q9UBN4-7"/>
    <property type="protein sequence ID" value="ENSP00000435969.1"/>
    <property type="gene ID" value="ENSG00000133107.15"/>
</dbReference>
<dbReference type="Ensembl" id="ENST00000625583.2">
    <molecule id="Q9UBN4-5"/>
    <property type="protein sequence ID" value="ENSP00000486109.1"/>
    <property type="gene ID" value="ENSG00000133107.15"/>
</dbReference>
<dbReference type="GeneID" id="7223"/>
<dbReference type="KEGG" id="hsa:7223"/>
<dbReference type="MANE-Select" id="ENST00000379705.8">
    <property type="protein sequence ID" value="ENSP00000369027.4"/>
    <property type="RefSeq nucleotide sequence ID" value="NM_016179.4"/>
    <property type="RefSeq protein sequence ID" value="NP_057263.1"/>
</dbReference>
<dbReference type="UCSC" id="uc001uws.4">
    <molecule id="Q9UBN4-1"/>
    <property type="organism name" value="human"/>
</dbReference>
<dbReference type="AGR" id="HGNC:12336"/>
<dbReference type="CTD" id="7223"/>
<dbReference type="DisGeNET" id="7223"/>
<dbReference type="GeneCards" id="TRPC4"/>
<dbReference type="HGNC" id="HGNC:12336">
    <property type="gene designation" value="TRPC4"/>
</dbReference>
<dbReference type="HPA" id="ENSG00000133107">
    <property type="expression patterns" value="Tissue enhanced (endometrium, seminal vesicle, smooth muscle)"/>
</dbReference>
<dbReference type="MalaCards" id="TRPC4"/>
<dbReference type="MIM" id="603651">
    <property type="type" value="gene"/>
</dbReference>
<dbReference type="neXtProt" id="NX_Q9UBN4"/>
<dbReference type="OpenTargets" id="ENSG00000133107"/>
<dbReference type="PharmGKB" id="PA37009"/>
<dbReference type="VEuPathDB" id="HostDB:ENSG00000133107"/>
<dbReference type="eggNOG" id="KOG3609">
    <property type="taxonomic scope" value="Eukaryota"/>
</dbReference>
<dbReference type="GeneTree" id="ENSGT01060000248594"/>
<dbReference type="HOGENOM" id="CLU_005716_1_1_1"/>
<dbReference type="InParanoid" id="Q9UBN4"/>
<dbReference type="OMA" id="KGIRCAE"/>
<dbReference type="OrthoDB" id="2373987at2759"/>
<dbReference type="PAN-GO" id="Q9UBN4">
    <property type="GO annotations" value="7 GO annotations based on evolutionary models"/>
</dbReference>
<dbReference type="PhylomeDB" id="Q9UBN4"/>
<dbReference type="TreeFam" id="TF313147"/>
<dbReference type="PathwayCommons" id="Q9UBN4"/>
<dbReference type="Reactome" id="R-HSA-3295583">
    <property type="pathway name" value="TRP channels"/>
</dbReference>
<dbReference type="Reactome" id="R-HSA-418890">
    <property type="pathway name" value="Role of second messengers in netrin-1 signaling"/>
</dbReference>
<dbReference type="SignaLink" id="Q9UBN4"/>
<dbReference type="SIGNOR" id="Q9UBN4"/>
<dbReference type="BioGRID-ORCS" id="7223">
    <property type="hits" value="14 hits in 1144 CRISPR screens"/>
</dbReference>
<dbReference type="ChiTaRS" id="TRPC4">
    <property type="organism name" value="human"/>
</dbReference>
<dbReference type="GeneWiki" id="TRPC4"/>
<dbReference type="GenomeRNAi" id="7223"/>
<dbReference type="Pharos" id="Q9UBN4">
    <property type="development level" value="Tchem"/>
</dbReference>
<dbReference type="PRO" id="PR:Q9UBN4"/>
<dbReference type="Proteomes" id="UP000005640">
    <property type="component" value="Chromosome 13"/>
</dbReference>
<dbReference type="RNAct" id="Q9UBN4">
    <property type="molecule type" value="protein"/>
</dbReference>
<dbReference type="Bgee" id="ENSG00000133107">
    <property type="expression patterns" value="Expressed in stromal cell of endometrium and 120 other cell types or tissues"/>
</dbReference>
<dbReference type="ExpressionAtlas" id="Q9UBN4">
    <property type="expression patterns" value="baseline and differential"/>
</dbReference>
<dbReference type="GO" id="GO:0016323">
    <property type="term" value="C:basolateral plasma membrane"/>
    <property type="evidence" value="ECO:0000314"/>
    <property type="project" value="BHF-UCL"/>
</dbReference>
<dbReference type="GO" id="GO:0034704">
    <property type="term" value="C:calcium channel complex"/>
    <property type="evidence" value="ECO:0000314"/>
    <property type="project" value="UniProtKB"/>
</dbReference>
<dbReference type="GO" id="GO:0034703">
    <property type="term" value="C:cation channel complex"/>
    <property type="evidence" value="ECO:0000318"/>
    <property type="project" value="GO_Central"/>
</dbReference>
<dbReference type="GO" id="GO:0005901">
    <property type="term" value="C:caveola"/>
    <property type="evidence" value="ECO:0007669"/>
    <property type="project" value="Ensembl"/>
</dbReference>
<dbReference type="GO" id="GO:0009986">
    <property type="term" value="C:cell surface"/>
    <property type="evidence" value="ECO:0000314"/>
    <property type="project" value="BHF-UCL"/>
</dbReference>
<dbReference type="GO" id="GO:0030863">
    <property type="term" value="C:cortical cytoskeleton"/>
    <property type="evidence" value="ECO:0000314"/>
    <property type="project" value="UniProtKB"/>
</dbReference>
<dbReference type="GO" id="GO:0005886">
    <property type="term" value="C:plasma membrane"/>
    <property type="evidence" value="ECO:0000314"/>
    <property type="project" value="UniProtKB"/>
</dbReference>
<dbReference type="GO" id="GO:0008013">
    <property type="term" value="F:beta-catenin binding"/>
    <property type="evidence" value="ECO:0000353"/>
    <property type="project" value="BHF-UCL"/>
</dbReference>
<dbReference type="GO" id="GO:0045296">
    <property type="term" value="F:cadherin binding"/>
    <property type="evidence" value="ECO:0000353"/>
    <property type="project" value="BHF-UCL"/>
</dbReference>
<dbReference type="GO" id="GO:0005262">
    <property type="term" value="F:calcium channel activity"/>
    <property type="evidence" value="ECO:0000314"/>
    <property type="project" value="UniProtKB"/>
</dbReference>
<dbReference type="GO" id="GO:0070679">
    <property type="term" value="F:inositol 1,4,5 trisphosphate binding"/>
    <property type="evidence" value="ECO:0000318"/>
    <property type="project" value="GO_Central"/>
</dbReference>
<dbReference type="GO" id="GO:0015279">
    <property type="term" value="F:store-operated calcium channel activity"/>
    <property type="evidence" value="ECO:0000315"/>
    <property type="project" value="UniProtKB"/>
</dbReference>
<dbReference type="GO" id="GO:0070509">
    <property type="term" value="P:calcium ion import"/>
    <property type="evidence" value="ECO:0000314"/>
    <property type="project" value="BHF-UCL"/>
</dbReference>
<dbReference type="GO" id="GO:0070588">
    <property type="term" value="P:calcium ion transmembrane transport"/>
    <property type="evidence" value="ECO:0000318"/>
    <property type="project" value="GO_Central"/>
</dbReference>
<dbReference type="GO" id="GO:0006816">
    <property type="term" value="P:calcium ion transport"/>
    <property type="evidence" value="ECO:0000304"/>
    <property type="project" value="ProtInc"/>
</dbReference>
<dbReference type="GO" id="GO:0014051">
    <property type="term" value="P:gamma-aminobutyric acid secretion"/>
    <property type="evidence" value="ECO:0007669"/>
    <property type="project" value="Ensembl"/>
</dbReference>
<dbReference type="GO" id="GO:0048709">
    <property type="term" value="P:oligodendrocyte differentiation"/>
    <property type="evidence" value="ECO:0007669"/>
    <property type="project" value="Ensembl"/>
</dbReference>
<dbReference type="GO" id="GO:0051480">
    <property type="term" value="P:regulation of cytosolic calcium ion concentration"/>
    <property type="evidence" value="ECO:0000318"/>
    <property type="project" value="GO_Central"/>
</dbReference>
<dbReference type="FunFam" id="1.25.40.20:FF:000023">
    <property type="entry name" value="short transient receptor potential channel 4 isoform X1"/>
    <property type="match status" value="1"/>
</dbReference>
<dbReference type="FunFam" id="1.10.287.70:FF:000266">
    <property type="entry name" value="Transient receptor potential cation channel subfamily c member 1"/>
    <property type="match status" value="1"/>
</dbReference>
<dbReference type="Gene3D" id="1.25.40.20">
    <property type="entry name" value="Ankyrin repeat-containing domain"/>
    <property type="match status" value="1"/>
</dbReference>
<dbReference type="InterPro" id="IPR002110">
    <property type="entry name" value="Ankyrin_rpt"/>
</dbReference>
<dbReference type="InterPro" id="IPR036770">
    <property type="entry name" value="Ankyrin_rpt-contain_sf"/>
</dbReference>
<dbReference type="InterPro" id="IPR005821">
    <property type="entry name" value="Ion_trans_dom"/>
</dbReference>
<dbReference type="InterPro" id="IPR013555">
    <property type="entry name" value="TRP_dom"/>
</dbReference>
<dbReference type="InterPro" id="IPR005460">
    <property type="entry name" value="TRPC4_channel"/>
</dbReference>
<dbReference type="InterPro" id="IPR002153">
    <property type="entry name" value="TRPC_channel"/>
</dbReference>
<dbReference type="NCBIfam" id="TIGR00870">
    <property type="entry name" value="trp"/>
    <property type="match status" value="1"/>
</dbReference>
<dbReference type="PANTHER" id="PTHR10117:SF25">
    <property type="entry name" value="SHORT TRANSIENT RECEPTOR POTENTIAL CHANNEL 4"/>
    <property type="match status" value="1"/>
</dbReference>
<dbReference type="PANTHER" id="PTHR10117">
    <property type="entry name" value="TRANSIENT RECEPTOR POTENTIAL CHANNEL"/>
    <property type="match status" value="1"/>
</dbReference>
<dbReference type="Pfam" id="PF00023">
    <property type="entry name" value="Ank"/>
    <property type="match status" value="1"/>
</dbReference>
<dbReference type="Pfam" id="PF12796">
    <property type="entry name" value="Ank_2"/>
    <property type="match status" value="1"/>
</dbReference>
<dbReference type="Pfam" id="PF00520">
    <property type="entry name" value="Ion_trans"/>
    <property type="match status" value="1"/>
</dbReference>
<dbReference type="Pfam" id="PF08344">
    <property type="entry name" value="TRP_2"/>
    <property type="match status" value="1"/>
</dbReference>
<dbReference type="PRINTS" id="PR01097">
    <property type="entry name" value="TRNSRECEPTRP"/>
</dbReference>
<dbReference type="PRINTS" id="PR01645">
    <property type="entry name" value="TRPCHANNEL4"/>
</dbReference>
<dbReference type="SMART" id="SM00248">
    <property type="entry name" value="ANK"/>
    <property type="match status" value="2"/>
</dbReference>
<dbReference type="SMART" id="SM01420">
    <property type="entry name" value="TRP_2"/>
    <property type="match status" value="1"/>
</dbReference>
<dbReference type="SUPFAM" id="SSF48403">
    <property type="entry name" value="Ankyrin repeat"/>
    <property type="match status" value="1"/>
</dbReference>
<dbReference type="PROSITE" id="PS50297">
    <property type="entry name" value="ANK_REP_REGION"/>
    <property type="match status" value="1"/>
</dbReference>
<dbReference type="PROSITE" id="PS50088">
    <property type="entry name" value="ANK_REPEAT"/>
    <property type="match status" value="1"/>
</dbReference>
<accession>Q9UBN4</accession>
<accession>B1ALE0</accession>
<accession>B1ALE1</accession>
<accession>B1ALE2</accession>
<accession>Q15721</accession>
<accession>Q3SWS6</accession>
<accession>Q96P03</accession>
<accession>Q96P04</accession>
<accession>Q96P05</accession>
<accession>Q9UIB0</accession>
<accession>Q9UIB1</accession>
<accession>Q9UIB2</accession>
<keyword id="KW-0002">3D-structure</keyword>
<keyword id="KW-0025">Alternative splicing</keyword>
<keyword id="KW-0040">ANK repeat</keyword>
<keyword id="KW-0106">Calcium</keyword>
<keyword id="KW-0107">Calcium channel</keyword>
<keyword id="KW-0109">Calcium transport</keyword>
<keyword id="KW-1003">Cell membrane</keyword>
<keyword id="KW-0175">Coiled coil</keyword>
<keyword id="KW-1015">Disulfide bond</keyword>
<keyword id="KW-0407">Ion channel</keyword>
<keyword id="KW-0406">Ion transport</keyword>
<keyword id="KW-0472">Membrane</keyword>
<keyword id="KW-0597">Phosphoprotein</keyword>
<keyword id="KW-1267">Proteomics identification</keyword>
<keyword id="KW-1185">Reference proteome</keyword>
<keyword id="KW-0677">Repeat</keyword>
<keyword id="KW-0812">Transmembrane</keyword>
<keyword id="KW-1133">Transmembrane helix</keyword>
<keyword id="KW-0813">Transport</keyword>
<reference key="1">
    <citation type="journal article" date="2000" name="Biochem. J.">
        <title>Cloning and expression of the human transient receptor potential 4 (TRP4) gene: localization and functional expression of human TRP4 and TRP3.</title>
        <authorList>
            <person name="McKay R.R."/>
            <person name="Szymeczek-Seay C.L."/>
            <person name="Lievremont J.-P."/>
            <person name="Bird G.S."/>
            <person name="Zitt C."/>
            <person name="Juengling E."/>
            <person name="Lueckhoff A."/>
            <person name="Putney J.W. Jr."/>
        </authorList>
    </citation>
    <scope>NUCLEOTIDE SEQUENCE [MRNA] (ISOFORM ALPHA)</scope>
    <scope>FUNCTION</scope>
    <scope>SUBCELLULAR LOCATION</scope>
    <scope>TRANSPORTER ACTIVITY</scope>
    <scope>ACTIVITY REGULATION</scope>
    <source>
        <tissue>Kidney</tissue>
    </source>
</reference>
<reference key="2">
    <citation type="journal article" date="2001" name="FEBS Lett.">
        <title>Alternative splice variants of hTrp4 differentially interact with the C-terminal portion of the inositol 1,4,5-trisphosphate receptors.</title>
        <authorList>
            <person name="Mery L."/>
            <person name="Magnino F."/>
            <person name="Schmidt K."/>
            <person name="Krause K.-H."/>
            <person name="Dufour J.-F."/>
        </authorList>
    </citation>
    <scope>NUCLEOTIDE SEQUENCE [MRNA] (ISOFORMS ALPHA; BETA; DELTA AND GAMMA)</scope>
    <scope>INTERACTION WITH ITPR1; ITPR2 AND ITPR3</scope>
    <source>
        <tissue>Embryonic kidney</tissue>
    </source>
</reference>
<reference key="3">
    <citation type="journal article" date="2002" name="J. Biol. Chem.">
        <title>Functional differences between TRPC4 splice variants.</title>
        <authorList>
            <person name="Schaefer M."/>
            <person name="Plant T.D."/>
            <person name="Stresow N."/>
            <person name="Albrecht N."/>
            <person name="Schultz G."/>
        </authorList>
    </citation>
    <scope>NUCLEOTIDE SEQUENCE [MRNA] (ISOFORMS ALPHA; BETA; EPSILON; ETA AND ZETA)</scope>
    <scope>SUBCELLULAR LOCATION</scope>
    <scope>FUNCTION</scope>
    <scope>TRANSPORTER ACTIVITY</scope>
    <scope>ACTIVITY REGULATION</scope>
</reference>
<reference key="4">
    <citation type="journal article" date="2004" name="Nature">
        <title>The DNA sequence and analysis of human chromosome 13.</title>
        <authorList>
            <person name="Dunham A."/>
            <person name="Matthews L.H."/>
            <person name="Burton J."/>
            <person name="Ashurst J.L."/>
            <person name="Howe K.L."/>
            <person name="Ashcroft K.J."/>
            <person name="Beare D.M."/>
            <person name="Burford D.C."/>
            <person name="Hunt S.E."/>
            <person name="Griffiths-Jones S."/>
            <person name="Jones M.C."/>
            <person name="Keenan S.J."/>
            <person name="Oliver K."/>
            <person name="Scott C.E."/>
            <person name="Ainscough R."/>
            <person name="Almeida J.P."/>
            <person name="Ambrose K.D."/>
            <person name="Andrews D.T."/>
            <person name="Ashwell R.I.S."/>
            <person name="Babbage A.K."/>
            <person name="Bagguley C.L."/>
            <person name="Bailey J."/>
            <person name="Bannerjee R."/>
            <person name="Barlow K.F."/>
            <person name="Bates K."/>
            <person name="Beasley H."/>
            <person name="Bird C.P."/>
            <person name="Bray-Allen S."/>
            <person name="Brown A.J."/>
            <person name="Brown J.Y."/>
            <person name="Burrill W."/>
            <person name="Carder C."/>
            <person name="Carter N.P."/>
            <person name="Chapman J.C."/>
            <person name="Clamp M.E."/>
            <person name="Clark S.Y."/>
            <person name="Clarke G."/>
            <person name="Clee C.M."/>
            <person name="Clegg S.C."/>
            <person name="Cobley V."/>
            <person name="Collins J.E."/>
            <person name="Corby N."/>
            <person name="Coville G.J."/>
            <person name="Deloukas P."/>
            <person name="Dhami P."/>
            <person name="Dunham I."/>
            <person name="Dunn M."/>
            <person name="Earthrowl M.E."/>
            <person name="Ellington A.G."/>
            <person name="Faulkner L."/>
            <person name="Frankish A.G."/>
            <person name="Frankland J."/>
            <person name="French L."/>
            <person name="Garner P."/>
            <person name="Garnett J."/>
            <person name="Gilbert J.G.R."/>
            <person name="Gilson C.J."/>
            <person name="Ghori J."/>
            <person name="Grafham D.V."/>
            <person name="Gribble S.M."/>
            <person name="Griffiths C."/>
            <person name="Hall R.E."/>
            <person name="Hammond S."/>
            <person name="Harley J.L."/>
            <person name="Hart E.A."/>
            <person name="Heath P.D."/>
            <person name="Howden P.J."/>
            <person name="Huckle E.J."/>
            <person name="Hunt P.J."/>
            <person name="Hunt A.R."/>
            <person name="Johnson C."/>
            <person name="Johnson D."/>
            <person name="Kay M."/>
            <person name="Kimberley A.M."/>
            <person name="King A."/>
            <person name="Laird G.K."/>
            <person name="Langford C.J."/>
            <person name="Lawlor S."/>
            <person name="Leongamornlert D.A."/>
            <person name="Lloyd D.M."/>
            <person name="Lloyd C."/>
            <person name="Loveland J.E."/>
            <person name="Lovell J."/>
            <person name="Martin S."/>
            <person name="Mashreghi-Mohammadi M."/>
            <person name="McLaren S.J."/>
            <person name="McMurray A."/>
            <person name="Milne S."/>
            <person name="Moore M.J.F."/>
            <person name="Nickerson T."/>
            <person name="Palmer S.A."/>
            <person name="Pearce A.V."/>
            <person name="Peck A.I."/>
            <person name="Pelan S."/>
            <person name="Phillimore B."/>
            <person name="Porter K.M."/>
            <person name="Rice C.M."/>
            <person name="Searle S."/>
            <person name="Sehra H.K."/>
            <person name="Shownkeen R."/>
            <person name="Skuce C.D."/>
            <person name="Smith M."/>
            <person name="Steward C.A."/>
            <person name="Sycamore N."/>
            <person name="Tester J."/>
            <person name="Thomas D.W."/>
            <person name="Tracey A."/>
            <person name="Tromans A."/>
            <person name="Tubby B."/>
            <person name="Wall M."/>
            <person name="Wallis J.M."/>
            <person name="West A.P."/>
            <person name="Whitehead S.L."/>
            <person name="Willey D.L."/>
            <person name="Wilming L."/>
            <person name="Wray P.W."/>
            <person name="Wright M.W."/>
            <person name="Young L."/>
            <person name="Coulson A."/>
            <person name="Durbin R.M."/>
            <person name="Hubbard T."/>
            <person name="Sulston J.E."/>
            <person name="Beck S."/>
            <person name="Bentley D.R."/>
            <person name="Rogers J."/>
            <person name="Ross M.T."/>
        </authorList>
    </citation>
    <scope>NUCLEOTIDE SEQUENCE [LARGE SCALE GENOMIC DNA]</scope>
</reference>
<reference key="5">
    <citation type="submission" date="2005-07" db="EMBL/GenBank/DDBJ databases">
        <authorList>
            <person name="Mural R.J."/>
            <person name="Istrail S."/>
            <person name="Sutton G.G."/>
            <person name="Florea L."/>
            <person name="Halpern A.L."/>
            <person name="Mobarry C.M."/>
            <person name="Lippert R."/>
            <person name="Walenz B."/>
            <person name="Shatkay H."/>
            <person name="Dew I."/>
            <person name="Miller J.R."/>
            <person name="Flanigan M.J."/>
            <person name="Edwards N.J."/>
            <person name="Bolanos R."/>
            <person name="Fasulo D."/>
            <person name="Halldorsson B.V."/>
            <person name="Hannenhalli S."/>
            <person name="Turner R."/>
            <person name="Yooseph S."/>
            <person name="Lu F."/>
            <person name="Nusskern D.R."/>
            <person name="Shue B.C."/>
            <person name="Zheng X.H."/>
            <person name="Zhong F."/>
            <person name="Delcher A.L."/>
            <person name="Huson D.H."/>
            <person name="Kravitz S.A."/>
            <person name="Mouchard L."/>
            <person name="Reinert K."/>
            <person name="Remington K.A."/>
            <person name="Clark A.G."/>
            <person name="Waterman M.S."/>
            <person name="Eichler E.E."/>
            <person name="Adams M.D."/>
            <person name="Hunkapiller M.W."/>
            <person name="Myers E.W."/>
            <person name="Venter J.C."/>
        </authorList>
    </citation>
    <scope>NUCLEOTIDE SEQUENCE [LARGE SCALE GENOMIC DNA]</scope>
</reference>
<reference key="6">
    <citation type="journal article" date="2004" name="Genome Res.">
        <title>The status, quality, and expansion of the NIH full-length cDNA project: the Mammalian Gene Collection (MGC).</title>
        <authorList>
            <consortium name="The MGC Project Team"/>
        </authorList>
    </citation>
    <scope>NUCLEOTIDE SEQUENCE [LARGE SCALE MRNA] (ISOFORM ALPHA)</scope>
</reference>
<reference key="7">
    <citation type="journal article" date="1996" name="Cell">
        <title>trp, a novel mammalian gene family essential for agonist-activated capacitative Ca2+ entry.</title>
        <authorList>
            <person name="Zhu X."/>
            <person name="Jiang M."/>
            <person name="Peyton M."/>
            <person name="Boulay G."/>
            <person name="Hurst R."/>
            <person name="Stefani E."/>
            <person name="Birnbaumer L."/>
        </authorList>
    </citation>
    <scope>NUCLEOTIDE SEQUENCE [MRNA] OF 514-633</scope>
    <source>
        <tissue>Kidney</tissue>
    </source>
</reference>
<reference key="8">
    <citation type="journal article" date="2002" name="J. Cell Sci.">
        <title>The PDZ-interacting domain of TRPC4 controls its localization and surface expression in HEK293 cells.</title>
        <authorList>
            <person name="Mery L."/>
            <person name="Strauss B."/>
            <person name="Dufour J.F."/>
            <person name="Krause K.H."/>
            <person name="Hoth M."/>
        </authorList>
    </citation>
    <scope>MUTAGENESIS OF 975-THR--LEU-977</scope>
    <scope>INTERACTION WITH NHERF1</scope>
    <scope>SUBCELLULAR LOCATION</scope>
    <scope>REGION PDZ-BINDING DOMAIN</scope>
</reference>
<reference key="9">
    <citation type="journal article" date="2002" name="Proc. Natl. Acad. Sci. U.S.A.">
        <title>Subunit composition of mammalian transient receptor potential channels in living cells.</title>
        <authorList>
            <person name="Hofmann T."/>
            <person name="Schaefer M."/>
            <person name="Schultz G."/>
            <person name="Gudermann T."/>
        </authorList>
    </citation>
    <scope>SUBUNIT</scope>
</reference>
<reference key="10">
    <citation type="journal article" date="2005" name="Circ. Res.">
        <title>Activation of the endothelial store-operated ISOC Ca2+ channel requires interaction of protein 4.1 with TRPC4.</title>
        <authorList>
            <person name="Cioffi D.L."/>
            <person name="Wu S."/>
            <person name="Alexeyev M."/>
            <person name="Goodman S.R."/>
            <person name="Zhu M.X."/>
            <person name="Stevens T."/>
        </authorList>
    </citation>
    <scope>SUBCELLULAR LOCATION</scope>
    <scope>INTERACTION WITH EPB41L2</scope>
</reference>
<reference key="11">
    <citation type="journal article" date="2005" name="J. Biol. Chem.">
        <title>MxA, a member of the dynamin superfamily, interacts with the ankyrin-like repeat domain of TRPC.</title>
        <authorList>
            <person name="Lussier M.P."/>
            <person name="Cayouette S."/>
            <person name="Lepage P.K."/>
            <person name="Bernier C.L."/>
            <person name="Francoeur N."/>
            <person name="St-Hilaire M."/>
            <person name="Pinard M."/>
            <person name="Boulay G."/>
        </authorList>
    </citation>
    <scope>INTERACTION WITH MX1</scope>
</reference>
<reference key="12">
    <citation type="journal article" date="2005" name="J. Biol. Chem.">
        <title>Epidermal growth factor induces tyrosine phosphorylation, membrane insertion, and activation of transient receptor potential channel 4.</title>
        <authorList>
            <person name="Odell A.F."/>
            <person name="Scott J.L."/>
            <person name="Van Helden D.F."/>
        </authorList>
    </citation>
    <scope>FUNCTION</scope>
    <scope>TRANSPORTER ACTIVITY</scope>
    <scope>ACTIVITY REGULATION</scope>
    <scope>SUBCELLULAR LOCATION</scope>
    <scope>PHOSPHORYLATION AT TYR-959 AND TYR-972</scope>
    <scope>MUTAGENESIS OF TYR-959 AND TYR-972</scope>
</reference>
<reference key="13">
    <citation type="journal article" date="2008" name="Cell Calcium">
        <title>RNF24, a new TRPC interacting protein, causes the intracellular retention of TRPC.</title>
        <authorList>
            <person name="Lussier M.P."/>
            <person name="Lepage P.K."/>
            <person name="Bousquet S.M."/>
            <person name="Boulay G."/>
        </authorList>
    </citation>
    <scope>INTERACTION WITH RNF24</scope>
</reference>
<reference key="14">
    <citation type="journal article" date="2008" name="J. Biol. Chem.">
        <title>The spectrin cytoskeleton influences the surface expression and activation of human transient receptor potential channel 4 channels.</title>
        <authorList>
            <person name="Odell A.F."/>
            <person name="Van Helden D.F."/>
            <person name="Scott J.L."/>
        </authorList>
    </citation>
    <scope>INTERACTION WITH SPTAN1 AND SPTBN5</scope>
</reference>
<reference key="15">
    <citation type="journal article" date="2010" name="J. Biol. Chem.">
        <title>The phospholipid-binding protein SESTD1 is a novel regulator of the transient receptor potential channels TRPC4 and TRPC5.</title>
        <authorList>
            <person name="Miehe S."/>
            <person name="Bieberstein A."/>
            <person name="Arnould I."/>
            <person name="Ihdene O."/>
            <person name="Rutten H."/>
            <person name="Strubing C."/>
        </authorList>
    </citation>
    <scope>INTERACTION WITH SESTD1</scope>
</reference>
<reference key="16">
    <citation type="journal article" date="2010" name="J. Biol. Chem.">
        <title>Cell-cell contact formation governs Ca2+ signaling by TRPC4 in the vascular endothelium: evidence for a regulatory TRPC4-beta-catenin interaction.</title>
        <authorList>
            <person name="Graziani A."/>
            <person name="Poteser M."/>
            <person name="Heupel W.M."/>
            <person name="Schleifer H."/>
            <person name="Krenn M."/>
            <person name="Drenckhahn D."/>
            <person name="Romanin C."/>
            <person name="Baumgartner W."/>
            <person name="Groschner K."/>
        </authorList>
    </citation>
    <scope>FUNCTION</scope>
    <scope>TISSUE SPECIFICITY</scope>
    <scope>INTERACTION WITH CDH5 AND CTNNB1</scope>
    <scope>TRANSPORTER ACTIVITY</scope>
    <scope>ACTIVITY REGULATION</scope>
</reference>
<reference key="17">
    <citation type="journal article" date="2006" name="Science">
        <title>The consensus coding sequences of human breast and colorectal cancers.</title>
        <authorList>
            <person name="Sjoeblom T."/>
            <person name="Jones S."/>
            <person name="Wood L.D."/>
            <person name="Parsons D.W."/>
            <person name="Lin J."/>
            <person name="Barber T.D."/>
            <person name="Mandelker D."/>
            <person name="Leary R.J."/>
            <person name="Ptak J."/>
            <person name="Silliman N."/>
            <person name="Szabo S."/>
            <person name="Buckhaults P."/>
            <person name="Farrell C."/>
            <person name="Meeh P."/>
            <person name="Markowitz S.D."/>
            <person name="Willis J."/>
            <person name="Dawson D."/>
            <person name="Willson J.K.V."/>
            <person name="Gazdar A.F."/>
            <person name="Hartigan J."/>
            <person name="Wu L."/>
            <person name="Liu C."/>
            <person name="Parmigiani G."/>
            <person name="Park B.H."/>
            <person name="Bachman K.E."/>
            <person name="Papadopoulos N."/>
            <person name="Vogelstein B."/>
            <person name="Kinzler K.W."/>
            <person name="Velculescu V.E."/>
        </authorList>
    </citation>
    <scope>VARIANT [LARGE SCALE ANALYSIS] LYS-138</scope>
</reference>
<reference evidence="21 22 23" key="18">
    <citation type="journal article" date="2025" name="Nat. Struct. Mol. Biol.">
        <title>Cryo-EM structure of the heteromeric TRPC1/TRPC4 channel.</title>
        <authorList>
            <person name="Won J."/>
            <person name="Kim J."/>
            <person name="Kim J."/>
            <person name="Ko J."/>
            <person name="Park C.H."/>
            <person name="Jeong B."/>
            <person name="Lee S.E."/>
            <person name="Jeong H."/>
            <person name="Kim S.H."/>
            <person name="Park H."/>
            <person name="So I."/>
            <person name="Lee H.H."/>
        </authorList>
    </citation>
    <scope>STRUCTURE BY ELECTRON MICROSCOPY (2.82 ANGSTROMS) IN COMPLEXES WITH TRPC1; CALCIUM; ZINC; PHOSPHOLIPID AND INHIBITOR PICO145</scope>
    <scope>FUNCTION</scope>
    <scope>TRANSPORTER ACTIVITY</scope>
    <scope>ACTIVITY REGULATION</scope>
    <scope>SUBUNIT</scope>
    <scope>SUBCELLULAR LOCATION</scope>
    <scope>TOPOLOGY</scope>
    <scope>ANK REPEATS</scope>
    <scope>DISULFIDE BONDS</scope>
</reference>
<proteinExistence type="evidence at protein level"/>
<organism>
    <name type="scientific">Homo sapiens</name>
    <name type="common">Human</name>
    <dbReference type="NCBI Taxonomy" id="9606"/>
    <lineage>
        <taxon>Eukaryota</taxon>
        <taxon>Metazoa</taxon>
        <taxon>Chordata</taxon>
        <taxon>Craniata</taxon>
        <taxon>Vertebrata</taxon>
        <taxon>Euteleostomi</taxon>
        <taxon>Mammalia</taxon>
        <taxon>Eutheria</taxon>
        <taxon>Euarchontoglires</taxon>
        <taxon>Primates</taxon>
        <taxon>Haplorrhini</taxon>
        <taxon>Catarrhini</taxon>
        <taxon>Hominidae</taxon>
        <taxon>Homo</taxon>
    </lineage>
</organism>
<feature type="chain" id="PRO_0000215314" description="Short transient receptor potential channel 4">
    <location>
        <begin position="1"/>
        <end position="977"/>
    </location>
</feature>
<feature type="topological domain" description="Cytoplasmic" evidence="17 21 22 23">
    <location>
        <begin position="1"/>
        <end position="324"/>
    </location>
</feature>
<feature type="intramembrane region" description="Discontinuously helical; Name=Pre-S1" evidence="17 21 22 23">
    <location>
        <begin position="325"/>
        <end position="359"/>
    </location>
</feature>
<feature type="topological domain" description="Cytoplasmic" evidence="17 21 22 23">
    <location>
        <begin position="360"/>
        <end position="362"/>
    </location>
</feature>
<feature type="transmembrane region" description="Helical; Name=S1" evidence="17 21 22 23">
    <location>
        <begin position="363"/>
        <end position="383"/>
    </location>
</feature>
<feature type="topological domain" description="Extracellular" evidence="17 21 22 23">
    <location>
        <begin position="384"/>
        <end position="403"/>
    </location>
</feature>
<feature type="transmembrane region" description="Helical; Name=S2" evidence="17 21 22 23">
    <location>
        <begin position="404"/>
        <end position="418"/>
    </location>
</feature>
<feature type="topological domain" description="Cytoplasmic" evidence="17 21 22 23">
    <location>
        <begin position="419"/>
        <end position="432"/>
    </location>
</feature>
<feature type="transmembrane region" description="Helical; Name=S3" evidence="17 21 22 23">
    <location>
        <begin position="433"/>
        <end position="453"/>
    </location>
</feature>
<feature type="topological domain" description="Extracellular" evidence="17 21 22 23">
    <location>
        <begin position="454"/>
        <end position="475"/>
    </location>
</feature>
<feature type="transmembrane region" description="Helical; Name=S4" evidence="17 21 22 23">
    <location>
        <begin position="476"/>
        <end position="498"/>
    </location>
</feature>
<feature type="topological domain" description="Cytoplasmic" evidence="17 21 22 23">
    <location>
        <begin position="499"/>
        <end position="511"/>
    </location>
</feature>
<feature type="transmembrane region" description="Helical; Name=S5" evidence="17 21 22 23">
    <location>
        <begin position="512"/>
        <end position="534"/>
    </location>
</feature>
<feature type="topological domain" description="Extracellular" evidence="17 21 22 23">
    <location>
        <begin position="535"/>
        <end position="599"/>
    </location>
</feature>
<feature type="transmembrane region" description="Helical; Name=S6" evidence="17 21 22 23">
    <location>
        <begin position="600"/>
        <end position="620"/>
    </location>
</feature>
<feature type="topological domain" description="Cytoplasmic" evidence="17 21 22 23">
    <location>
        <begin position="621"/>
        <end position="977"/>
    </location>
</feature>
<feature type="repeat" description="ANK 1" evidence="17 21 22 23">
    <location>
        <begin position="29"/>
        <end position="60"/>
    </location>
</feature>
<feature type="repeat" description="ANK 2" evidence="17 21 22 23">
    <location>
        <begin position="71"/>
        <end position="93"/>
    </location>
</feature>
<feature type="repeat" description="ANK 3" evidence="17 21 22 23">
    <location>
        <begin position="96"/>
        <end position="118"/>
    </location>
</feature>
<feature type="repeat" description="ANK 4" evidence="17 21 22 23">
    <location>
        <begin position="141"/>
        <end position="165"/>
    </location>
</feature>
<feature type="region of interest" description="Interaction with ITPR1, ITPR2 and ITPR3" evidence="5">
    <location>
        <begin position="615"/>
        <end position="977"/>
    </location>
</feature>
<feature type="region of interest" description="Disordered" evidence="3">
    <location>
        <begin position="762"/>
        <end position="790"/>
    </location>
</feature>
<feature type="region of interest" description="PDZ-binding domain" evidence="8">
    <location>
        <begin position="975"/>
        <end position="977"/>
    </location>
</feature>
<feature type="coiled-coil region" evidence="2">
    <location>
        <begin position="223"/>
        <end position="260"/>
    </location>
</feature>
<feature type="compositionally biased region" description="Low complexity" evidence="3">
    <location>
        <begin position="764"/>
        <end position="775"/>
    </location>
</feature>
<feature type="compositionally biased region" description="Basic and acidic residues" evidence="3">
    <location>
        <begin position="777"/>
        <end position="788"/>
    </location>
</feature>
<feature type="binding site" evidence="17 21 22 23">
    <location>
        <position position="172"/>
    </location>
    <ligand>
        <name>Zn(2+)</name>
        <dbReference type="ChEBI" id="CHEBI:29105"/>
    </ligand>
</feature>
<feature type="binding site" evidence="17 21 22 23">
    <location>
        <position position="176"/>
    </location>
    <ligand>
        <name>Zn(2+)</name>
        <dbReference type="ChEBI" id="CHEBI:29105"/>
    </ligand>
</feature>
<feature type="binding site" evidence="17 21 22 23">
    <location>
        <position position="178"/>
    </location>
    <ligand>
        <name>Zn(2+)</name>
        <dbReference type="ChEBI" id="CHEBI:29105"/>
    </ligand>
</feature>
<feature type="binding site" evidence="17 21 22 23">
    <location>
        <position position="181"/>
    </location>
    <ligand>
        <name>Zn(2+)</name>
        <dbReference type="ChEBI" id="CHEBI:29105"/>
    </ligand>
</feature>
<feature type="binding site" evidence="17 21 22 23">
    <location>
        <position position="417"/>
    </location>
    <ligand>
        <name>Ca(2+)</name>
        <dbReference type="ChEBI" id="CHEBI:29108"/>
    </ligand>
</feature>
<feature type="binding site" evidence="17 21 23">
    <location>
        <position position="420"/>
    </location>
    <ligand>
        <name>Ca(2+)</name>
        <dbReference type="ChEBI" id="CHEBI:29108"/>
    </ligand>
</feature>
<feature type="binding site" evidence="17 21 22 23">
    <location>
        <position position="435"/>
    </location>
    <ligand>
        <name>Ca(2+)</name>
        <dbReference type="ChEBI" id="CHEBI:29108"/>
    </ligand>
</feature>
<feature type="binding site" evidence="17 21 23">
    <location>
        <position position="438"/>
    </location>
    <ligand>
        <name>Ca(2+)</name>
        <dbReference type="ChEBI" id="CHEBI:29108"/>
    </ligand>
</feature>
<feature type="modified residue" description="Phosphotyrosine; by FYN" evidence="10">
    <location>
        <position position="959"/>
    </location>
</feature>
<feature type="modified residue" description="Phosphotyrosine; by FYN" evidence="10">
    <location>
        <position position="972"/>
    </location>
</feature>
<feature type="disulfide bond" evidence="21 22 23">
    <location>
        <begin position="549"/>
        <end position="554"/>
    </location>
</feature>
<feature type="splice variant" id="VSP_041439" description="In isoform Zeta." evidence="19">
    <location>
        <begin position="127"/>
        <end position="299"/>
    </location>
</feature>
<feature type="splice variant" id="VSP_047747" description="In isoform Eta." evidence="19">
    <original>FVAQPNCQQLLASRWYDEFPGWRR</original>
    <variation>ASYGEKLNRCGMADFRTTSMIGGI</variation>
    <location>
        <begin position="300"/>
        <end position="323"/>
    </location>
</feature>
<feature type="splice variant" id="VSP_047748" description="In isoform Eta." evidence="19">
    <location>
        <begin position="324"/>
        <end position="977"/>
    </location>
</feature>
<feature type="splice variant" id="VSP_006567" description="In isoform Gamma." evidence="18">
    <location>
        <begin position="629"/>
        <end position="693"/>
    </location>
</feature>
<feature type="splice variant" id="VSP_041262" description="In isoform Epsilon." evidence="19">
    <original>G</original>
    <variation>GVRTQH</variation>
    <location>
        <position position="693"/>
    </location>
</feature>
<feature type="splice variant" id="VSP_006568" description="In isoform Delta." evidence="18">
    <location>
        <begin position="730"/>
        <end position="870"/>
    </location>
</feature>
<feature type="splice variant" id="VSP_006569" description="In isoform Beta and isoform Gamma." evidence="18 19">
    <location>
        <begin position="785"/>
        <end position="868"/>
    </location>
</feature>
<feature type="sequence variant" id="VAR_036452" description="In a breast cancer sample; somatic mutation." evidence="12">
    <original>E</original>
    <variation>K</variation>
    <location>
        <position position="138"/>
    </location>
</feature>
<feature type="mutagenesis site" description="Reduced EGF-induced phosphorylation and decreased association with NHERF1. Loss of EGF-induced phosphorylation and decreased association with NHERF1; when associated with F-972." evidence="10">
    <original>Y</original>
    <variation>F</variation>
    <location>
        <position position="959"/>
    </location>
</feature>
<feature type="mutagenesis site" description="Reduced EGF-induced phosphorylation and decreased association with NHERF1. Loss of EGF-induced phosphorylation and decreased association with NHERF1; when associated with F-959." evidence="10">
    <original>Y</original>
    <variation>F</variation>
    <location>
        <position position="972"/>
    </location>
</feature>
<feature type="mutagenesis site" description="Loss of interaction with NHERF1." evidence="8">
    <location>
        <begin position="975"/>
        <end position="977"/>
    </location>
</feature>
<feature type="strand" evidence="24">
    <location>
        <begin position="17"/>
        <end position="19"/>
    </location>
</feature>
<feature type="helix" evidence="26">
    <location>
        <begin position="31"/>
        <end position="42"/>
    </location>
</feature>
<feature type="helix" evidence="26">
    <location>
        <begin position="45"/>
        <end position="58"/>
    </location>
</feature>
<feature type="helix" evidence="26">
    <location>
        <begin position="73"/>
        <end position="79"/>
    </location>
</feature>
<feature type="helix" evidence="26">
    <location>
        <begin position="83"/>
        <end position="91"/>
    </location>
</feature>
<feature type="helix" evidence="26">
    <location>
        <begin position="99"/>
        <end position="105"/>
    </location>
</feature>
<feature type="helix" evidence="26">
    <location>
        <begin position="112"/>
        <end position="115"/>
    </location>
</feature>
<feature type="helix" evidence="26">
    <location>
        <begin position="145"/>
        <end position="152"/>
    </location>
</feature>
<feature type="helix" evidence="26">
    <location>
        <begin position="155"/>
        <end position="163"/>
    </location>
</feature>
<feature type="strand" evidence="24">
    <location>
        <begin position="167"/>
        <end position="169"/>
    </location>
</feature>
<feature type="helix" evidence="26">
    <location>
        <begin position="179"/>
        <end position="187"/>
    </location>
</feature>
<feature type="helix" evidence="26">
    <location>
        <begin position="189"/>
        <end position="203"/>
    </location>
</feature>
<feature type="helix" evidence="26">
    <location>
        <begin position="206"/>
        <end position="212"/>
    </location>
</feature>
<feature type="helix" evidence="26">
    <location>
        <begin position="216"/>
        <end position="233"/>
    </location>
</feature>
<feature type="helix" evidence="26">
    <location>
        <begin position="238"/>
        <end position="256"/>
    </location>
</feature>
<feature type="helix" evidence="26">
    <location>
        <begin position="262"/>
        <end position="269"/>
    </location>
</feature>
<feature type="helix" evidence="26">
    <location>
        <begin position="287"/>
        <end position="294"/>
    </location>
</feature>
<feature type="helix" evidence="26">
    <location>
        <begin position="298"/>
        <end position="301"/>
    </location>
</feature>
<feature type="helix" evidence="26">
    <location>
        <begin position="304"/>
        <end position="314"/>
    </location>
</feature>
<feature type="turn" evidence="26">
    <location>
        <begin position="315"/>
        <end position="317"/>
    </location>
</feature>
<feature type="helix" evidence="26">
    <location>
        <begin position="321"/>
        <end position="323"/>
    </location>
</feature>
<feature type="helix" evidence="26">
    <location>
        <begin position="326"/>
        <end position="338"/>
    </location>
</feature>
<feature type="helix" evidence="26">
    <location>
        <begin position="340"/>
        <end position="349"/>
    </location>
</feature>
<feature type="turn" evidence="26">
    <location>
        <begin position="354"/>
        <end position="360"/>
    </location>
</feature>
<feature type="helix" evidence="26">
    <location>
        <begin position="362"/>
        <end position="385"/>
    </location>
</feature>
<feature type="strand" evidence="26">
    <location>
        <begin position="392"/>
        <end position="396"/>
    </location>
</feature>
<feature type="helix" evidence="26">
    <location>
        <begin position="401"/>
        <end position="423"/>
    </location>
</feature>
<feature type="helix" evidence="26">
    <location>
        <begin position="426"/>
        <end position="431"/>
    </location>
</feature>
<feature type="helix" evidence="26">
    <location>
        <begin position="433"/>
        <end position="458"/>
    </location>
</feature>
<feature type="helix" evidence="26">
    <location>
        <begin position="465"/>
        <end position="467"/>
    </location>
</feature>
<feature type="helix" evidence="26">
    <location>
        <begin position="473"/>
        <end position="490"/>
    </location>
</feature>
<feature type="helix" evidence="26">
    <location>
        <begin position="491"/>
        <end position="497"/>
    </location>
</feature>
<feature type="helix" evidence="26">
    <location>
        <begin position="502"/>
        <end position="538"/>
    </location>
</feature>
<feature type="turn" evidence="26">
    <location>
        <begin position="539"/>
        <end position="541"/>
    </location>
</feature>
<feature type="strand" evidence="26">
    <location>
        <begin position="546"/>
        <end position="548"/>
    </location>
</feature>
<feature type="strand" evidence="26">
    <location>
        <begin position="550"/>
        <end position="556"/>
    </location>
</feature>
<feature type="strand" evidence="26">
    <location>
        <begin position="560"/>
        <end position="563"/>
    </location>
</feature>
<feature type="helix" evidence="26">
    <location>
        <begin position="564"/>
        <end position="573"/>
    </location>
</feature>
<feature type="turn" evidence="26">
    <location>
        <begin position="574"/>
        <end position="577"/>
    </location>
</feature>
<feature type="helix" evidence="26">
    <location>
        <begin position="581"/>
        <end position="584"/>
    </location>
</feature>
<feature type="strand" evidence="25">
    <location>
        <begin position="587"/>
        <end position="589"/>
    </location>
</feature>
<feature type="helix" evidence="26">
    <location>
        <begin position="591"/>
        <end position="609"/>
    </location>
</feature>
<feature type="helix" evidence="26">
    <location>
        <begin position="612"/>
        <end position="628"/>
    </location>
</feature>
<feature type="helix" evidence="26">
    <location>
        <begin position="631"/>
        <end position="644"/>
    </location>
</feature>
<feature type="turn" evidence="26">
    <location>
        <begin position="645"/>
        <end position="647"/>
    </location>
</feature>
<feature type="strand" evidence="24">
    <location>
        <begin position="648"/>
        <end position="651"/>
    </location>
</feature>
<feature type="turn" evidence="26">
    <location>
        <begin position="655"/>
        <end position="657"/>
    </location>
</feature>
<feature type="helix" evidence="26">
    <location>
        <begin position="696"/>
        <end position="720"/>
    </location>
</feature>
<feature type="helix" evidence="26">
    <location>
        <begin position="722"/>
        <end position="727"/>
    </location>
</feature>
<feature type="helix" evidence="26">
    <location>
        <begin position="733"/>
        <end position="754"/>
    </location>
</feature>